<reference key="1">
    <citation type="journal article" date="1996" name="J. Bacteriol.">
        <title>The conjugal transfer system of Agrobacterium tumefaciens octopine-type Ti plasmids is closely related to the transfer system of an IncP plasmid and distantly related to Ti plasmid vir genes.</title>
        <authorList>
            <person name="Alt-Morbe J."/>
            <person name="Stryker J.L."/>
            <person name="Fuqua C."/>
            <person name="Li P.L."/>
            <person name="Farrand S.K."/>
            <person name="Winans S.C."/>
        </authorList>
    </citation>
    <scope>NUCLEOTIDE SEQUENCE [GENOMIC DNA]</scope>
</reference>
<proteinExistence type="inferred from homology"/>
<sequence>MSSRLIVILALLAVVAAASAGIGTWITVQPEPASGSGAAATDTPSSEERRRHRDQFFGGDSNREIRGGQEMKPRW</sequence>
<keyword id="KW-0184">Conjugation</keyword>
<keyword id="KW-0614">Plasmid</keyword>
<keyword id="KW-0732">Signal</keyword>
<accession>P54912</accession>
<evidence type="ECO:0000255" key="1"/>
<evidence type="ECO:0000256" key="2">
    <source>
        <dbReference type="SAM" id="MobiDB-lite"/>
    </source>
</evidence>
<protein>
    <recommendedName>
        <fullName>Conjugal transfer protein TrbK</fullName>
    </recommendedName>
</protein>
<organism>
    <name type="scientific">Rhizobium radiobacter</name>
    <name type="common">Agrobacterium tumefaciens</name>
    <name type="synonym">Agrobacterium radiobacter</name>
    <dbReference type="NCBI Taxonomy" id="358"/>
    <lineage>
        <taxon>Bacteria</taxon>
        <taxon>Pseudomonadati</taxon>
        <taxon>Pseudomonadota</taxon>
        <taxon>Alphaproteobacteria</taxon>
        <taxon>Hyphomicrobiales</taxon>
        <taxon>Rhizobiaceae</taxon>
        <taxon>Rhizobium/Agrobacterium group</taxon>
        <taxon>Agrobacterium</taxon>
        <taxon>Agrobacterium tumefaciens complex</taxon>
    </lineage>
</organism>
<name>TRBK_RHIRD</name>
<dbReference type="EMBL" id="AF242881">
    <property type="protein sequence ID" value="AAB95099.1"/>
    <property type="molecule type" value="Genomic_DNA"/>
</dbReference>
<dbReference type="RefSeq" id="NP_059755.1">
    <property type="nucleotide sequence ID" value="NC_002377.1"/>
</dbReference>
<dbReference type="RefSeq" id="WP_010892443.1">
    <property type="nucleotide sequence ID" value="NZ_QSNU01000012.1"/>
</dbReference>
<dbReference type="OrthoDB" id="8117029at2"/>
<dbReference type="InterPro" id="IPR020065">
    <property type="entry name" value="Conjugal_tfr_protein_TrbK"/>
</dbReference>
<dbReference type="InterPro" id="IPR024475">
    <property type="entry name" value="TrbJ/K_C"/>
</dbReference>
<dbReference type="NCBIfam" id="TIGR04361">
    <property type="entry name" value="TrbK_Ti"/>
    <property type="match status" value="1"/>
</dbReference>
<dbReference type="Pfam" id="PF10907">
    <property type="entry name" value="DUF2749"/>
    <property type="match status" value="1"/>
</dbReference>
<feature type="signal peptide" evidence="1">
    <location>
        <begin position="1"/>
        <end position="20"/>
    </location>
</feature>
<feature type="chain" id="PRO_0000022587" description="Conjugal transfer protein TrbK">
    <location>
        <begin position="21"/>
        <end position="75"/>
    </location>
</feature>
<feature type="region of interest" description="Disordered" evidence="2">
    <location>
        <begin position="28"/>
        <end position="75"/>
    </location>
</feature>
<feature type="compositionally biased region" description="Basic and acidic residues" evidence="2">
    <location>
        <begin position="61"/>
        <end position="75"/>
    </location>
</feature>
<gene>
    <name type="primary">trbK</name>
</gene>
<geneLocation type="plasmid">
    <name>pTiA6NC</name>
</geneLocation>